<protein>
    <recommendedName>
        <fullName>COP9 signalosome complex subunit 5</fullName>
        <shortName>Signalosome subunit 5</shortName>
        <ecNumber>3.4.-.-</ecNumber>
    </recommendedName>
    <alternativeName>
        <fullName>JAB1 homolog</fullName>
    </alternativeName>
</protein>
<gene>
    <name type="primary">csn-5</name>
    <name type="ORF">B0547.1</name>
</gene>
<accession>P91001</accession>
<dbReference type="EC" id="3.4.-.-"/>
<dbReference type="EMBL" id="FO080232">
    <property type="protein sequence ID" value="CCD62206.1"/>
    <property type="molecule type" value="Genomic_DNA"/>
</dbReference>
<dbReference type="PIR" id="T29320">
    <property type="entry name" value="T29320"/>
</dbReference>
<dbReference type="RefSeq" id="NP_500841.1">
    <property type="nucleotide sequence ID" value="NM_068440.5"/>
</dbReference>
<dbReference type="SMR" id="P91001"/>
<dbReference type="BioGRID" id="42464">
    <property type="interactions" value="72"/>
</dbReference>
<dbReference type="ComplexPortal" id="CPX-3386">
    <property type="entry name" value="COP9 signalosome complex"/>
</dbReference>
<dbReference type="DIP" id="DIP-26100N"/>
<dbReference type="FunCoup" id="P91001">
    <property type="interactions" value="3417"/>
</dbReference>
<dbReference type="IntAct" id="P91001">
    <property type="interactions" value="45"/>
</dbReference>
<dbReference type="MINT" id="P91001"/>
<dbReference type="STRING" id="6239.B0547.1.1"/>
<dbReference type="MEROPS" id="M67.002"/>
<dbReference type="iPTMnet" id="P91001"/>
<dbReference type="PaxDb" id="6239-B0547.1"/>
<dbReference type="PeptideAtlas" id="P91001"/>
<dbReference type="EnsemblMetazoa" id="B0547.1.1">
    <property type="protein sequence ID" value="B0547.1.1"/>
    <property type="gene ID" value="WBGene00000817"/>
</dbReference>
<dbReference type="GeneID" id="177342"/>
<dbReference type="KEGG" id="cel:CELE_B0547.1"/>
<dbReference type="UCSC" id="B0547.1.1">
    <property type="organism name" value="c. elegans"/>
</dbReference>
<dbReference type="AGR" id="WB:WBGene00000817"/>
<dbReference type="CTD" id="177342"/>
<dbReference type="WormBase" id="B0547.1">
    <property type="protein sequence ID" value="CE06722"/>
    <property type="gene ID" value="WBGene00000817"/>
    <property type="gene designation" value="csn-5"/>
</dbReference>
<dbReference type="eggNOG" id="KOG1554">
    <property type="taxonomic scope" value="Eukaryota"/>
</dbReference>
<dbReference type="GeneTree" id="ENSGT00550000074850"/>
<dbReference type="HOGENOM" id="CLU_053034_0_2_1"/>
<dbReference type="InParanoid" id="P91001"/>
<dbReference type="OMA" id="VEQNEMR"/>
<dbReference type="OrthoDB" id="10266268at2759"/>
<dbReference type="PhylomeDB" id="P91001"/>
<dbReference type="Reactome" id="R-CEL-5696394">
    <property type="pathway name" value="DNA Damage Recognition in GG-NER"/>
</dbReference>
<dbReference type="Reactome" id="R-CEL-6781823">
    <property type="pathway name" value="Formation of TC-NER Pre-Incision Complex"/>
</dbReference>
<dbReference type="Reactome" id="R-CEL-8856825">
    <property type="pathway name" value="Cargo recognition for clathrin-mediated endocytosis"/>
</dbReference>
<dbReference type="Reactome" id="R-CEL-8951664">
    <property type="pathway name" value="Neddylation"/>
</dbReference>
<dbReference type="SignaLink" id="P91001"/>
<dbReference type="PRO" id="PR:P91001"/>
<dbReference type="Proteomes" id="UP000001940">
    <property type="component" value="Chromosome IV"/>
</dbReference>
<dbReference type="Bgee" id="WBGene00000817">
    <property type="expression patterns" value="Expressed in germ line (C elegans) and 4 other cell types or tissues"/>
</dbReference>
<dbReference type="GO" id="GO:0031672">
    <property type="term" value="C:A band"/>
    <property type="evidence" value="ECO:0000314"/>
    <property type="project" value="WormBase"/>
</dbReference>
<dbReference type="GO" id="GO:0008180">
    <property type="term" value="C:COP9 signalosome"/>
    <property type="evidence" value="ECO:0000353"/>
    <property type="project" value="ComplexPortal"/>
</dbReference>
<dbReference type="GO" id="GO:0005737">
    <property type="term" value="C:cytoplasm"/>
    <property type="evidence" value="ECO:0000314"/>
    <property type="project" value="WormBase"/>
</dbReference>
<dbReference type="GO" id="GO:0005634">
    <property type="term" value="C:nucleus"/>
    <property type="evidence" value="ECO:0000314"/>
    <property type="project" value="WormBase"/>
</dbReference>
<dbReference type="GO" id="GO:0017151">
    <property type="term" value="F:DEAD/H-box RNA helicase binding"/>
    <property type="evidence" value="ECO:0000353"/>
    <property type="project" value="WormBase"/>
</dbReference>
<dbReference type="GO" id="GO:0019784">
    <property type="term" value="F:deNEDDylase activity"/>
    <property type="evidence" value="ECO:0000318"/>
    <property type="project" value="GO_Central"/>
</dbReference>
<dbReference type="GO" id="GO:0046872">
    <property type="term" value="F:metal ion binding"/>
    <property type="evidence" value="ECO:0007669"/>
    <property type="project" value="UniProtKB-KW"/>
</dbReference>
<dbReference type="GO" id="GO:0008237">
    <property type="term" value="F:metallopeptidase activity"/>
    <property type="evidence" value="ECO:0000318"/>
    <property type="project" value="GO_Central"/>
</dbReference>
<dbReference type="GO" id="GO:0060184">
    <property type="term" value="P:cell cycle switching"/>
    <property type="evidence" value="ECO:0000315"/>
    <property type="project" value="ComplexPortal"/>
</dbReference>
<dbReference type="GO" id="GO:0008406">
    <property type="term" value="P:gonad development"/>
    <property type="evidence" value="ECO:0000315"/>
    <property type="project" value="WormBase"/>
</dbReference>
<dbReference type="GO" id="GO:0048477">
    <property type="term" value="P:oogenesis"/>
    <property type="evidence" value="ECO:0000315"/>
    <property type="project" value="WormBase"/>
</dbReference>
<dbReference type="GO" id="GO:0000338">
    <property type="term" value="P:protein deneddylation"/>
    <property type="evidence" value="ECO:0000316"/>
    <property type="project" value="WormBase"/>
</dbReference>
<dbReference type="GO" id="GO:0006508">
    <property type="term" value="P:proteolysis"/>
    <property type="evidence" value="ECO:0007669"/>
    <property type="project" value="UniProtKB-KW"/>
</dbReference>
<dbReference type="GO" id="GO:0051726">
    <property type="term" value="P:regulation of cell cycle"/>
    <property type="evidence" value="ECO:0000318"/>
    <property type="project" value="GO_Central"/>
</dbReference>
<dbReference type="GO" id="GO:1905879">
    <property type="term" value="P:regulation of oogenesis"/>
    <property type="evidence" value="ECO:0000315"/>
    <property type="project" value="ComplexPortal"/>
</dbReference>
<dbReference type="GO" id="GO:0022414">
    <property type="term" value="P:reproductive process"/>
    <property type="evidence" value="ECO:0000315"/>
    <property type="project" value="WormBase"/>
</dbReference>
<dbReference type="CDD" id="cd08069">
    <property type="entry name" value="MPN_RPN11_CSN5"/>
    <property type="match status" value="1"/>
</dbReference>
<dbReference type="FunFam" id="3.40.140.10:FF:000003">
    <property type="entry name" value="COP9 signalosome complex subunit 5"/>
    <property type="match status" value="1"/>
</dbReference>
<dbReference type="Gene3D" id="3.40.140.10">
    <property type="entry name" value="Cytidine Deaminase, domain 2"/>
    <property type="match status" value="1"/>
</dbReference>
<dbReference type="InterPro" id="IPR040961">
    <property type="entry name" value="CSN5_C"/>
</dbReference>
<dbReference type="InterPro" id="IPR000555">
    <property type="entry name" value="JAMM/MPN+_dom"/>
</dbReference>
<dbReference type="InterPro" id="IPR050242">
    <property type="entry name" value="JAMM_MPN+_peptidase_M67A"/>
</dbReference>
<dbReference type="InterPro" id="IPR037518">
    <property type="entry name" value="MPN"/>
</dbReference>
<dbReference type="PANTHER" id="PTHR10410">
    <property type="entry name" value="EUKARYOTIC TRANSLATION INITIATION FACTOR 3 -RELATED"/>
    <property type="match status" value="1"/>
</dbReference>
<dbReference type="Pfam" id="PF18323">
    <property type="entry name" value="CSN5_C"/>
    <property type="match status" value="1"/>
</dbReference>
<dbReference type="Pfam" id="PF01398">
    <property type="entry name" value="JAB"/>
    <property type="match status" value="1"/>
</dbReference>
<dbReference type="SMART" id="SM00232">
    <property type="entry name" value="JAB_MPN"/>
    <property type="match status" value="1"/>
</dbReference>
<dbReference type="SUPFAM" id="SSF102712">
    <property type="entry name" value="JAB1/MPN domain"/>
    <property type="match status" value="1"/>
</dbReference>
<dbReference type="PROSITE" id="PS50249">
    <property type="entry name" value="MPN"/>
    <property type="match status" value="1"/>
</dbReference>
<name>CSN5_CAEEL</name>
<proteinExistence type="evidence at protein level"/>
<sequence>MEVDNVKPSSSVPQRNWEKENNVQNVDSIFEYNNKQQVEIRNAKPWDKDPHYFKQIKISAIALLKMTMHAKRGGNLEIMGLLQGRIDANSFIILDVFALPVEGTETRVNAQAQAYEYMTVYSEMCDTEGRKEKVVGWYHSHPGYGCWLSGIDVSTQTLNQKFQEPWVAIVIDPLRTMSAGKVDIGAFRTYPEGYRPPDDVPSEYQSIPLAKIEDFGVHCKRYYSLDVSFFKSQLDAHILTSLWNSYWISTLSSSPLFSNVEFLNNQIQDINQKLSAVDKKLQLNDRSVDGHEALMKVVTDAKAVGDELETGRISHLVKQLLFARQAGGGCGCSHASAGSPMDIAVATEPEKAGPSPSAPEPAVEMADA</sequence>
<reference key="1">
    <citation type="journal article" date="1998" name="Science">
        <title>Genome sequence of the nematode C. elegans: a platform for investigating biology.</title>
        <authorList>
            <consortium name="The C. elegans sequencing consortium"/>
        </authorList>
    </citation>
    <scope>NUCLEOTIDE SEQUENCE [LARGE SCALE GENOMIC DNA]</scope>
    <source>
        <strain>Bristol N2</strain>
    </source>
</reference>
<reference key="2">
    <citation type="journal article" date="2000" name="Science">
        <title>Protein interaction mapping in C. elegans using proteins involved in vulval development.</title>
        <authorList>
            <person name="Walhout A.J.M."/>
            <person name="Sordella R."/>
            <person name="Lu X."/>
            <person name="Hartley J.L."/>
            <person name="Temple G.F."/>
            <person name="Brasch M.A."/>
            <person name="Thierry-Mieg N."/>
            <person name="Vidal M."/>
        </authorList>
    </citation>
    <scope>INTERACTION WITH LAG-1</scope>
</reference>
<reference key="3">
    <citation type="journal article" date="2002" name="Dev. Biol.">
        <title>The GLH proteins, Caenorhabditis elegans P granule components, associate with CSN-5 and KGB-1, proteins necessary for fertility, and with ZYX-1, a predicted cytoskeletal protein.</title>
        <authorList>
            <person name="Smith P."/>
            <person name="Leung-Chiu W.-M."/>
            <person name="Montgomery R."/>
            <person name="Orsborn A."/>
            <person name="Kuznicki K."/>
            <person name="Gressman-Coberly E."/>
            <person name="Mutapcic L."/>
            <person name="Bennett K."/>
        </authorList>
    </citation>
    <scope>INTERACTION WITH GLH-1 AND GLH-3</scope>
</reference>
<reference key="4">
    <citation type="journal article" date="2003" name="Curr. Biol.">
        <title>Neddylation and deneddylation of CUL-3 is required to target MEI-1/katanin for degradation at the meiosis-to-mitosis transition in C. elegans.</title>
        <authorList>
            <person name="Pintard L."/>
            <person name="Kurz T."/>
            <person name="Glaser S."/>
            <person name="Willis J.H."/>
            <person name="Peter M."/>
            <person name="Bowerman B."/>
        </authorList>
    </citation>
    <scope>FUNCTION</scope>
    <scope>SUBCELLULAR LOCATION</scope>
    <scope>INTERACTION WITH CSN-1</scope>
</reference>
<reference key="5">
    <citation type="journal article" date="2007" name="Development">
        <title>GLH-1, the C. elegans P granule protein, is controlled by the JNK KGB-1 and by the COP9 subunit CSN-5.</title>
        <authorList>
            <person name="Orsborn A.M."/>
            <person name="Li W."/>
            <person name="McEwen T.J."/>
            <person name="Mizuno T."/>
            <person name="Kuzmin E."/>
            <person name="Matsumoto K."/>
            <person name="Bennett K.L."/>
        </authorList>
    </citation>
    <scope>FUNCTION</scope>
    <scope>INTERACTION WITH KGB-1</scope>
</reference>
<comment type="function">
    <text evidence="1 6 8">Probable protease subunit of the COP9 signalosome complex (CSN), a complex involved in various cellular and developmental processes. The CSN complex is an essential regulator of the ubiquitin (Ubl) conjugation pathway by mediating the deneddylation of the cullin subunits of the SCF-type E3 ligase complexes, leading to decrease the Ubl ligase activity of SCF. In the complex, it probably acts as the catalytic center that mediates the cleavage of Nedd8 from cullins. It however has no metalloprotease activity by itself and requires the other subunits of the CSN complex (By similarity). The CSN complex plays an essential role in embryogenesis and oogenesis and is required to regulate microtubule stability in the early embryo. Mediates mei-3/katanin targeting for degradation at the meiosis to mitosis transition via deneddylation of cul-3. May stabilize glh-1 protein levels by antagonizing kgb-1 (PubMed:17699606).</text>
</comment>
<comment type="cofactor">
    <cofactor evidence="1">
        <name>a divalent metal cation</name>
        <dbReference type="ChEBI" id="CHEBI:60240"/>
    </cofactor>
</comment>
<comment type="subunit">
    <text evidence="4 5 6 7">Component of the CSN complex, probably composed of csn-1, csn-2, csn-3, csn-4, csn-5, csn-6 and csn-7. Within the complex it probably interacts directly with csn-1 (PubMed:12781129). Interacts with glh-1 and glh-3 (PubMed:12435362). Interacts with lag-1 (PubMed:10615043). Interacts with kgb-1 (PubMed:17699606).</text>
</comment>
<comment type="interaction">
    <interactant intactId="EBI-313007">
        <id>P91001</id>
    </interactant>
    <interactant intactId="EBI-1571791">
        <id>P34689</id>
        <label>glh-1</label>
    </interactant>
    <organismsDiffer>false</organismsDiffer>
    <experiments>3</experiments>
</comment>
<comment type="interaction">
    <interactant intactId="EBI-313007">
        <id>P91001</id>
    </interactant>
    <interactant intactId="EBI-1571750">
        <id>O01836</id>
        <label>glh-3</label>
    </interactant>
    <organismsDiffer>false</organismsDiffer>
    <experiments>2</experiments>
</comment>
<comment type="subcellular location">
    <subcellularLocation>
        <location evidence="6">Cytoplasm</location>
    </subcellularLocation>
    <subcellularLocation>
        <location evidence="6">Nucleus</location>
    </subcellularLocation>
</comment>
<comment type="domain">
    <text evidence="1">The JAMM motif is essential for the protease activity of the CSN complex resulting in deneddylation of cullins. It constitutes the catalytic center of the complex (By similarity).</text>
</comment>
<comment type="similarity">
    <text evidence="9">Belongs to the peptidase M67A family. CSN5 subfamily.</text>
</comment>
<keyword id="KW-0963">Cytoplasm</keyword>
<keyword id="KW-0217">Developmental protein</keyword>
<keyword id="KW-0221">Differentiation</keyword>
<keyword id="KW-0378">Hydrolase</keyword>
<keyword id="KW-0479">Metal-binding</keyword>
<keyword id="KW-0482">Metalloprotease</keyword>
<keyword id="KW-0539">Nucleus</keyword>
<keyword id="KW-0896">Oogenesis</keyword>
<keyword id="KW-0645">Protease</keyword>
<keyword id="KW-1185">Reference proteome</keyword>
<keyword id="KW-0736">Signalosome</keyword>
<keyword id="KW-0862">Zinc</keyword>
<evidence type="ECO:0000250" key="1"/>
<evidence type="ECO:0000255" key="2">
    <source>
        <dbReference type="PROSITE-ProRule" id="PRU01182"/>
    </source>
</evidence>
<evidence type="ECO:0000256" key="3">
    <source>
        <dbReference type="SAM" id="MobiDB-lite"/>
    </source>
</evidence>
<evidence type="ECO:0000269" key="4">
    <source>
    </source>
</evidence>
<evidence type="ECO:0000269" key="5">
    <source>
    </source>
</evidence>
<evidence type="ECO:0000269" key="6">
    <source>
    </source>
</evidence>
<evidence type="ECO:0000269" key="7">
    <source>
    </source>
</evidence>
<evidence type="ECO:0000303" key="8">
    <source>
    </source>
</evidence>
<evidence type="ECO:0000305" key="9"/>
<feature type="chain" id="PRO_0000194840" description="COP9 signalosome complex subunit 5">
    <location>
        <begin position="1"/>
        <end position="368"/>
    </location>
</feature>
<feature type="domain" description="MPN" evidence="2">
    <location>
        <begin position="56"/>
        <end position="193"/>
    </location>
</feature>
<feature type="region of interest" description="Disordered" evidence="3">
    <location>
        <begin position="347"/>
        <end position="368"/>
    </location>
</feature>
<feature type="short sequence motif" description="JAMM motif" evidence="2">
    <location>
        <begin position="139"/>
        <end position="152"/>
    </location>
</feature>
<feature type="binding site" evidence="2">
    <location>
        <position position="139"/>
    </location>
    <ligand>
        <name>Zn(2+)</name>
        <dbReference type="ChEBI" id="CHEBI:29105"/>
        <note>catalytic</note>
    </ligand>
</feature>
<feature type="binding site" evidence="2">
    <location>
        <position position="141"/>
    </location>
    <ligand>
        <name>Zn(2+)</name>
        <dbReference type="ChEBI" id="CHEBI:29105"/>
        <note>catalytic</note>
    </ligand>
</feature>
<feature type="binding site" evidence="2">
    <location>
        <position position="152"/>
    </location>
    <ligand>
        <name>Zn(2+)</name>
        <dbReference type="ChEBI" id="CHEBI:29105"/>
        <note>catalytic</note>
    </ligand>
</feature>
<organism>
    <name type="scientific">Caenorhabditis elegans</name>
    <dbReference type="NCBI Taxonomy" id="6239"/>
    <lineage>
        <taxon>Eukaryota</taxon>
        <taxon>Metazoa</taxon>
        <taxon>Ecdysozoa</taxon>
        <taxon>Nematoda</taxon>
        <taxon>Chromadorea</taxon>
        <taxon>Rhabditida</taxon>
        <taxon>Rhabditina</taxon>
        <taxon>Rhabditomorpha</taxon>
        <taxon>Rhabditoidea</taxon>
        <taxon>Rhabditidae</taxon>
        <taxon>Peloderinae</taxon>
        <taxon>Caenorhabditis</taxon>
    </lineage>
</organism>